<comment type="function">
    <text evidence="3">May play a role in cell viability.</text>
</comment>
<comment type="subunit">
    <text evidence="4">Interacts with AGK and SLC25A11.</text>
</comment>
<comment type="interaction">
    <interactant intactId="EBI-50428917">
        <id>A0A096LP01</id>
    </interactant>
    <interactant intactId="EBI-2269837">
        <id>Q53H12</id>
        <label>AGK</label>
    </interactant>
    <organismsDiffer>false</organismsDiffer>
    <experiments>18</experiments>
</comment>
<comment type="interaction">
    <interactant intactId="EBI-50428917">
        <id>A0A096LP01</id>
    </interactant>
    <interactant intactId="EBI-359174">
        <id>Q02978</id>
        <label>SLC25A11</label>
    </interactant>
    <organismsDiffer>false</organismsDiffer>
    <experiments>12</experiments>
</comment>
<comment type="subcellular location">
    <subcellularLocation>
        <location evidence="2 4">Mitochondrion outer membrane</location>
        <topology evidence="1">Single-pass membrane protein</topology>
    </subcellularLocation>
</comment>
<comment type="alternative products">
    <event type="alternative splicing"/>
    <isoform>
        <id>A0A096LP01-1</id>
        <name>1</name>
        <sequence type="displayed"/>
    </isoform>
    <isoform>
        <id>A0A096LP01-2</id>
        <name>2</name>
        <sequence type="described" ref="VSP_062288"/>
    </isoform>
</comment>
<comment type="tissue specificity">
    <text evidence="4">Detected in kidney (at protein level).</text>
</comment>
<comment type="miscellaneous">
    <text evidence="4">Suppresses clear cell renal cell carcinoma growth and metastatis (PubMed:37009826). In renal cancer cell lines, interaction with SLC25A11 maintains mitochondrial glutathione and enhances mitochondrial metabolism (PubMed:37009826). In renal cancer cell lines, interaction with AGK promotes AGK mitochondrial localization and inactivates AGK-mediated AKT phosphorylation, leading to inhibition of AKT signaling and repression of metastasis (PubMed:37009826).</text>
</comment>
<comment type="similarity">
    <text evidence="5">Belongs to the SMIM26 family.</text>
</comment>
<accession>A0A096LP01</accession>
<accession>A0A096LPB2</accession>
<evidence type="ECO:0000255" key="1"/>
<evidence type="ECO:0000269" key="2">
    <source>
    </source>
</evidence>
<evidence type="ECO:0000269" key="3">
    <source>
    </source>
</evidence>
<evidence type="ECO:0000269" key="4">
    <source>
    </source>
</evidence>
<evidence type="ECO:0000305" key="5"/>
<evidence type="ECO:0000312" key="6">
    <source>
        <dbReference type="HGNC" id="HGNC:43430"/>
    </source>
</evidence>
<dbReference type="EMBL" id="MW979249">
    <property type="protein sequence ID" value="QZW25476.1"/>
    <property type="molecule type" value="mRNA"/>
</dbReference>
<dbReference type="EMBL" id="MW979250">
    <property type="protein sequence ID" value="QZW25477.1"/>
    <property type="molecule type" value="mRNA"/>
</dbReference>
<dbReference type="EMBL" id="AL121900">
    <property type="status" value="NOT_ANNOTATED_CDS"/>
    <property type="molecule type" value="Genomic_DNA"/>
</dbReference>
<dbReference type="EMBL" id="BC015983">
    <property type="status" value="NOT_ANNOTATED_CDS"/>
    <property type="molecule type" value="mRNA"/>
</dbReference>
<dbReference type="CCDS" id="CCDS86936.1">
    <molecule id="A0A096LP01-1"/>
</dbReference>
<dbReference type="CCDS" id="CCDS86937.1">
    <molecule id="A0A096LP01-2"/>
</dbReference>
<dbReference type="RefSeq" id="NP_001335886.1">
    <molecule id="A0A096LP01-1"/>
    <property type="nucleotide sequence ID" value="NM_001348957.2"/>
</dbReference>
<dbReference type="RefSeq" id="NP_001335887.1">
    <molecule id="A0A096LP01-2"/>
    <property type="nucleotide sequence ID" value="NM_001348958.2"/>
</dbReference>
<dbReference type="FunCoup" id="A0A096LP01">
    <property type="interactions" value="33"/>
</dbReference>
<dbReference type="IntAct" id="A0A096LP01">
    <property type="interactions" value="350"/>
</dbReference>
<dbReference type="STRING" id="9606.ENSP00000485316"/>
<dbReference type="BioMuta" id="SMIM26"/>
<dbReference type="jPOST" id="A0A096LP01"/>
<dbReference type="MassIVE" id="A0A096LP01"/>
<dbReference type="PaxDb" id="9606-ENSP00000485316"/>
<dbReference type="PeptideAtlas" id="A0A096LP01"/>
<dbReference type="Pumba" id="A0A096LP01"/>
<dbReference type="Antibodypedia" id="77488">
    <property type="antibodies" value="3 antibodies from 3 providers"/>
</dbReference>
<dbReference type="Ensembl" id="ENST00000411646.2">
    <molecule id="A0A096LP01-1"/>
    <property type="protein sequence ID" value="ENSP00000485316.2"/>
    <property type="gene ID" value="ENSG00000232388.5"/>
</dbReference>
<dbReference type="Ensembl" id="ENST00000435844.3">
    <molecule id="A0A096LP01-2"/>
    <property type="protein sequence ID" value="ENSP00000485491.1"/>
    <property type="gene ID" value="ENSG00000232388.5"/>
</dbReference>
<dbReference type="GeneID" id="388789"/>
<dbReference type="MANE-Select" id="ENST00000411646.2">
    <property type="protein sequence ID" value="ENSP00000485316.2"/>
    <property type="RefSeq nucleotide sequence ID" value="NM_001348957.2"/>
    <property type="RefSeq protein sequence ID" value="NP_001335886.1"/>
</dbReference>
<dbReference type="UCSC" id="uc002wrd.5">
    <molecule id="A0A096LP01-1"/>
    <property type="organism name" value="human"/>
</dbReference>
<dbReference type="AGR" id="HGNC:43430"/>
<dbReference type="GeneCards" id="SMIM26"/>
<dbReference type="HGNC" id="HGNC:43430">
    <property type="gene designation" value="SMIM26"/>
</dbReference>
<dbReference type="HPA" id="ENSG00000232388">
    <property type="expression patterns" value="Low tissue specificity"/>
</dbReference>
<dbReference type="neXtProt" id="NX_A0A096LP01"/>
<dbReference type="VEuPathDB" id="HostDB:ENSG00000232388"/>
<dbReference type="eggNOG" id="ENOG502T084">
    <property type="taxonomic scope" value="Eukaryota"/>
</dbReference>
<dbReference type="GeneTree" id="ENSGT00860000134050"/>
<dbReference type="HOGENOM" id="CLU_2385584_0_0_1"/>
<dbReference type="InParanoid" id="A0A096LP01"/>
<dbReference type="OMA" id="YGLGAWT"/>
<dbReference type="OrthoDB" id="9905290at2759"/>
<dbReference type="PAN-GO" id="A0A096LP01">
    <property type="GO annotations" value="0 GO annotations based on evolutionary models"/>
</dbReference>
<dbReference type="Pharos" id="A0A096LP01">
    <property type="development level" value="Tdark"/>
</dbReference>
<dbReference type="PRO" id="PR:A0A096LP01"/>
<dbReference type="Proteomes" id="UP000005640">
    <property type="component" value="Chromosome 20"/>
</dbReference>
<dbReference type="RNAct" id="A0A096LP01">
    <property type="molecule type" value="protein"/>
</dbReference>
<dbReference type="Bgee" id="ENSG00000232388">
    <property type="expression patterns" value="Expressed in quadriceps femoris and 104 other cell types or tissues"/>
</dbReference>
<dbReference type="ExpressionAtlas" id="A0A096LP01">
    <property type="expression patterns" value="baseline and differential"/>
</dbReference>
<dbReference type="GO" id="GO:0005741">
    <property type="term" value="C:mitochondrial outer membrane"/>
    <property type="evidence" value="ECO:0000314"/>
    <property type="project" value="UniProtKB"/>
</dbReference>
<dbReference type="GO" id="GO:0005739">
    <property type="term" value="C:mitochondrion"/>
    <property type="evidence" value="ECO:0000314"/>
    <property type="project" value="UniProtKB"/>
</dbReference>
<dbReference type="GO" id="GO:0019901">
    <property type="term" value="F:protein kinase binding"/>
    <property type="evidence" value="ECO:0000353"/>
    <property type="project" value="UniProtKB"/>
</dbReference>
<dbReference type="GO" id="GO:0044325">
    <property type="term" value="F:transmembrane transporter binding"/>
    <property type="evidence" value="ECO:0000353"/>
    <property type="project" value="UniProtKB"/>
</dbReference>
<dbReference type="InterPro" id="IPR038831">
    <property type="entry name" value="SMIM26"/>
</dbReference>
<dbReference type="PANTHER" id="PTHR40386">
    <property type="entry name" value="SMALL INTEGRAL MEMBRANE PROTEIN 26"/>
    <property type="match status" value="1"/>
</dbReference>
<dbReference type="PANTHER" id="PTHR40386:SF1">
    <property type="entry name" value="SMALL INTEGRAL MEMBRANE PROTEIN 26"/>
    <property type="match status" value="1"/>
</dbReference>
<gene>
    <name evidence="6" type="primary">SMIM26</name>
    <name evidence="6" type="synonym">LINC00493</name>
</gene>
<keyword id="KW-0025">Alternative splicing</keyword>
<keyword id="KW-0903">Direct protein sequencing</keyword>
<keyword id="KW-0472">Membrane</keyword>
<keyword id="KW-0496">Mitochondrion</keyword>
<keyword id="KW-1000">Mitochondrion outer membrane</keyword>
<keyword id="KW-1267">Proteomics identification</keyword>
<keyword id="KW-1185">Reference proteome</keyword>
<keyword id="KW-0812">Transmembrane</keyword>
<keyword id="KW-1133">Transmembrane helix</keyword>
<sequence length="95" mass="10908">MYRNEFTAWYRRMSVVYGIGTWSVLGSLLYYSRTMAKSSVDQKDGSASEVPSELSERPKGFYVETVVTYKEDFVPNTEKILNYWKSWTGGPGTEP</sequence>
<proteinExistence type="evidence at protein level"/>
<feature type="chain" id="PRO_0000440652" description="Small integral membrane protein 26">
    <location>
        <begin position="1"/>
        <end position="95"/>
    </location>
</feature>
<feature type="transmembrane region" description="Helical" evidence="1">
    <location>
        <begin position="13"/>
        <end position="35"/>
    </location>
</feature>
<feature type="splice variant" id="VSP_062288" description="In isoform 2." evidence="3">
    <location>
        <position position="40"/>
    </location>
</feature>
<name>SIM26_HUMAN</name>
<reference key="1">
    <citation type="journal article" date="2021" name="Int. J. Mol. Sci.">
        <title>Investigation of LINC00493/SMIM26 Gene Suggests Its Dual Functioning at mRNA and Protein Level.</title>
        <authorList>
            <person name="Konina D."/>
            <person name="Sparber P."/>
            <person name="Viakhireva I."/>
            <person name="Filatova A."/>
            <person name="Skoblov M."/>
        </authorList>
    </citation>
    <scope>NUCLEOTIDE SEQUENCE [MRNA] (ISOFORMS 1 AND 2)</scope>
    <scope>FUNCTION</scope>
</reference>
<reference key="2">
    <citation type="journal article" date="2001" name="Nature">
        <title>The DNA sequence and comparative analysis of human chromosome 20.</title>
        <authorList>
            <person name="Deloukas P."/>
            <person name="Matthews L.H."/>
            <person name="Ashurst J.L."/>
            <person name="Burton J."/>
            <person name="Gilbert J.G.R."/>
            <person name="Jones M."/>
            <person name="Stavrides G."/>
            <person name="Almeida J.P."/>
            <person name="Babbage A.K."/>
            <person name="Bagguley C.L."/>
            <person name="Bailey J."/>
            <person name="Barlow K.F."/>
            <person name="Bates K.N."/>
            <person name="Beard L.M."/>
            <person name="Beare D.M."/>
            <person name="Beasley O.P."/>
            <person name="Bird C.P."/>
            <person name="Blakey S.E."/>
            <person name="Bridgeman A.M."/>
            <person name="Brown A.J."/>
            <person name="Buck D."/>
            <person name="Burrill W.D."/>
            <person name="Butler A.P."/>
            <person name="Carder C."/>
            <person name="Carter N.P."/>
            <person name="Chapman J.C."/>
            <person name="Clamp M."/>
            <person name="Clark G."/>
            <person name="Clark L.N."/>
            <person name="Clark S.Y."/>
            <person name="Clee C.M."/>
            <person name="Clegg S."/>
            <person name="Cobley V.E."/>
            <person name="Collier R.E."/>
            <person name="Connor R.E."/>
            <person name="Corby N.R."/>
            <person name="Coulson A."/>
            <person name="Coville G.J."/>
            <person name="Deadman R."/>
            <person name="Dhami P.D."/>
            <person name="Dunn M."/>
            <person name="Ellington A.G."/>
            <person name="Frankland J.A."/>
            <person name="Fraser A."/>
            <person name="French L."/>
            <person name="Garner P."/>
            <person name="Grafham D.V."/>
            <person name="Griffiths C."/>
            <person name="Griffiths M.N.D."/>
            <person name="Gwilliam R."/>
            <person name="Hall R.E."/>
            <person name="Hammond S."/>
            <person name="Harley J.L."/>
            <person name="Heath P.D."/>
            <person name="Ho S."/>
            <person name="Holden J.L."/>
            <person name="Howden P.J."/>
            <person name="Huckle E."/>
            <person name="Hunt A.R."/>
            <person name="Hunt S.E."/>
            <person name="Jekosch K."/>
            <person name="Johnson C.M."/>
            <person name="Johnson D."/>
            <person name="Kay M.P."/>
            <person name="Kimberley A.M."/>
            <person name="King A."/>
            <person name="Knights A."/>
            <person name="Laird G.K."/>
            <person name="Lawlor S."/>
            <person name="Lehvaeslaiho M.H."/>
            <person name="Leversha M.A."/>
            <person name="Lloyd C."/>
            <person name="Lloyd D.M."/>
            <person name="Lovell J.D."/>
            <person name="Marsh V.L."/>
            <person name="Martin S.L."/>
            <person name="McConnachie L.J."/>
            <person name="McLay K."/>
            <person name="McMurray A.A."/>
            <person name="Milne S.A."/>
            <person name="Mistry D."/>
            <person name="Moore M.J.F."/>
            <person name="Mullikin J.C."/>
            <person name="Nickerson T."/>
            <person name="Oliver K."/>
            <person name="Parker A."/>
            <person name="Patel R."/>
            <person name="Pearce T.A.V."/>
            <person name="Peck A.I."/>
            <person name="Phillimore B.J.C.T."/>
            <person name="Prathalingam S.R."/>
            <person name="Plumb R.W."/>
            <person name="Ramsay H."/>
            <person name="Rice C.M."/>
            <person name="Ross M.T."/>
            <person name="Scott C.E."/>
            <person name="Sehra H.K."/>
            <person name="Shownkeen R."/>
            <person name="Sims S."/>
            <person name="Skuce C.D."/>
            <person name="Smith M.L."/>
            <person name="Soderlund C."/>
            <person name="Steward C.A."/>
            <person name="Sulston J.E."/>
            <person name="Swann R.M."/>
            <person name="Sycamore N."/>
            <person name="Taylor R."/>
            <person name="Tee L."/>
            <person name="Thomas D.W."/>
            <person name="Thorpe A."/>
            <person name="Tracey A."/>
            <person name="Tromans A.C."/>
            <person name="Vaudin M."/>
            <person name="Wall M."/>
            <person name="Wallis J.M."/>
            <person name="Whitehead S.L."/>
            <person name="Whittaker P."/>
            <person name="Willey D.L."/>
            <person name="Williams L."/>
            <person name="Williams S.A."/>
            <person name="Wilming L."/>
            <person name="Wray P.W."/>
            <person name="Hubbard T."/>
            <person name="Durbin R.M."/>
            <person name="Bentley D.R."/>
            <person name="Beck S."/>
            <person name="Rogers J."/>
        </authorList>
    </citation>
    <scope>NUCLEOTIDE SEQUENCE [LARGE SCALE GENOMIC DNA]</scope>
</reference>
<reference key="3">
    <citation type="journal article" date="2004" name="Genome Res.">
        <title>The status, quality, and expansion of the NIH full-length cDNA project: the Mammalian Gene Collection (MGC).</title>
        <authorList>
            <consortium name="The MGC Project Team"/>
        </authorList>
    </citation>
    <scope>NUCLEOTIDE SEQUENCE [LARGE SCALE MRNA] (ISOFORM 1)</scope>
</reference>
<reference key="4">
    <citation type="journal article" date="2023" name="EMBO Rep.">
        <title>LINC00493-encoded microprotein SMIM26 exerts anti-metastatic activity in renal cell carcinoma.</title>
        <authorList>
            <person name="Meng K."/>
            <person name="Lu S."/>
            <person name="Li Y.Y."/>
            <person name="Hu L.L."/>
            <person name="Zhang J."/>
            <person name="Cao Y."/>
            <person name="Wang Y."/>
            <person name="Zhang C.Z."/>
            <person name="He Q.Y."/>
        </authorList>
    </citation>
    <scope>PROTEIN SEQUENCE OF 4-11; 44-59 AND 71-78</scope>
    <scope>IDENTIFICATION BY MASS SPECTROMETRY</scope>
    <scope>INTERACTION WITH AGK AND SLC25A11</scope>
    <scope>SUBCELLULAR LOCATION</scope>
    <scope>TISSUE SPECIFICITY</scope>
    <scope>ROLE IN RENAL CELL CARCINOMA</scope>
</reference>
<reference key="5">
    <citation type="journal article" date="2021" name="J. Biochem.">
        <title>Identification and analysis of short open reading frames (sORFs) in the initially annotated noncoding RNA LINC00493 from human cells.</title>
        <authorList>
            <person name="Yeasmin F."/>
            <person name="Imamachi N."/>
            <person name="Tanu T."/>
            <person name="Taniue K."/>
            <person name="Kawamura T."/>
            <person name="Yada T."/>
            <person name="Akimitsu N."/>
        </authorList>
    </citation>
    <scope>SUBCELLULAR LOCATION</scope>
</reference>
<protein>
    <recommendedName>
        <fullName evidence="6">Small integral membrane protein 26</fullName>
    </recommendedName>
</protein>
<organism>
    <name type="scientific">Homo sapiens</name>
    <name type="common">Human</name>
    <dbReference type="NCBI Taxonomy" id="9606"/>
    <lineage>
        <taxon>Eukaryota</taxon>
        <taxon>Metazoa</taxon>
        <taxon>Chordata</taxon>
        <taxon>Craniata</taxon>
        <taxon>Vertebrata</taxon>
        <taxon>Euteleostomi</taxon>
        <taxon>Mammalia</taxon>
        <taxon>Eutheria</taxon>
        <taxon>Euarchontoglires</taxon>
        <taxon>Primates</taxon>
        <taxon>Haplorrhini</taxon>
        <taxon>Catarrhini</taxon>
        <taxon>Hominidae</taxon>
        <taxon>Homo</taxon>
    </lineage>
</organism>